<organism>
    <name type="scientific">Yersinia pestis (strain Pestoides F)</name>
    <dbReference type="NCBI Taxonomy" id="386656"/>
    <lineage>
        <taxon>Bacteria</taxon>
        <taxon>Pseudomonadati</taxon>
        <taxon>Pseudomonadota</taxon>
        <taxon>Gammaproteobacteria</taxon>
        <taxon>Enterobacterales</taxon>
        <taxon>Yersiniaceae</taxon>
        <taxon>Yersinia</taxon>
    </lineage>
</organism>
<comment type="function">
    <text evidence="1">Catalyzes the transfer of the gamma-phosphate of ATP to D-galactose to form alpha-D-galactose-1-phosphate (Gal-1-P).</text>
</comment>
<comment type="catalytic activity">
    <reaction evidence="1">
        <text>alpha-D-galactose + ATP = alpha-D-galactose 1-phosphate + ADP + H(+)</text>
        <dbReference type="Rhea" id="RHEA:13553"/>
        <dbReference type="ChEBI" id="CHEBI:15378"/>
        <dbReference type="ChEBI" id="CHEBI:28061"/>
        <dbReference type="ChEBI" id="CHEBI:30616"/>
        <dbReference type="ChEBI" id="CHEBI:58336"/>
        <dbReference type="ChEBI" id="CHEBI:456216"/>
        <dbReference type="EC" id="2.7.1.6"/>
    </reaction>
</comment>
<comment type="pathway">
    <text evidence="1">Carbohydrate metabolism; galactose metabolism.</text>
</comment>
<comment type="subcellular location">
    <subcellularLocation>
        <location evidence="1">Cytoplasm</location>
    </subcellularLocation>
</comment>
<comment type="similarity">
    <text evidence="1">Belongs to the GHMP kinase family. GalK subfamily.</text>
</comment>
<gene>
    <name evidence="1" type="primary">galK</name>
    <name type="ordered locus">YPDSF_2560</name>
</gene>
<accession>A4TNR8</accession>
<name>GAL1_YERPP</name>
<protein>
    <recommendedName>
        <fullName evidence="1">Galactokinase</fullName>
        <ecNumber evidence="1">2.7.1.6</ecNumber>
    </recommendedName>
    <alternativeName>
        <fullName evidence="1">Galactose kinase</fullName>
    </alternativeName>
</protein>
<keyword id="KW-0067">ATP-binding</keyword>
<keyword id="KW-0119">Carbohydrate metabolism</keyword>
<keyword id="KW-0963">Cytoplasm</keyword>
<keyword id="KW-0299">Galactose metabolism</keyword>
<keyword id="KW-0418">Kinase</keyword>
<keyword id="KW-0460">Magnesium</keyword>
<keyword id="KW-0479">Metal-binding</keyword>
<keyword id="KW-0547">Nucleotide-binding</keyword>
<keyword id="KW-0808">Transferase</keyword>
<reference key="1">
    <citation type="submission" date="2007-02" db="EMBL/GenBank/DDBJ databases">
        <title>Complete sequence of chromosome of Yersinia pestis Pestoides F.</title>
        <authorList>
            <consortium name="US DOE Joint Genome Institute"/>
            <person name="Copeland A."/>
            <person name="Lucas S."/>
            <person name="Lapidus A."/>
            <person name="Barry K."/>
            <person name="Detter J.C."/>
            <person name="Glavina del Rio T."/>
            <person name="Hammon N."/>
            <person name="Israni S."/>
            <person name="Dalin E."/>
            <person name="Tice H."/>
            <person name="Pitluck S."/>
            <person name="Di Bartolo G."/>
            <person name="Chain P."/>
            <person name="Malfatti S."/>
            <person name="Shin M."/>
            <person name="Vergez L."/>
            <person name="Schmutz J."/>
            <person name="Larimer F."/>
            <person name="Land M."/>
            <person name="Hauser L."/>
            <person name="Worsham P."/>
            <person name="Chu M."/>
            <person name="Bearden S."/>
            <person name="Garcia E."/>
            <person name="Richardson P."/>
        </authorList>
    </citation>
    <scope>NUCLEOTIDE SEQUENCE [LARGE SCALE GENOMIC DNA]</scope>
    <source>
        <strain>Pestoides F</strain>
    </source>
</reference>
<sequence length="383" mass="41866">MSLKQHTQTIFRQQFDRESDITIKAPGRVNLIGEHTDYNDGFVLPCAINYETVISCGKRDDRQIRVIAADYENQQDIFSLDAPIVPHPEYRWADYVRGVVKHLQMRNADFGGADLVICGNVPQGAGLSSSASLEVAVGQALQSLYQLPLSGVELALNGQEAENQFVGCNCGIMDQLISALGKKDHALLIDCRTLETRAVPMPENMAVVIINSNIQRGLVDSEYNTRRQQCEAAARFFGVKALRDVEPSLFFSIQDELDPVVAKRARHVISENARTLAAADALAAGNLKLMGQLMQESHISMRDDFEITVPPIDRLVEIVKSVIGDQGGVRMTGGGFGGCIIALMPLELVEQVRTTVAQEYPAHSGGKKETFYVCQASQGAGLC</sequence>
<feature type="chain" id="PRO_1000005774" description="Galactokinase">
    <location>
        <begin position="1"/>
        <end position="383"/>
    </location>
</feature>
<feature type="active site" description="Proton acceptor" evidence="1">
    <location>
        <position position="174"/>
    </location>
</feature>
<feature type="binding site" evidence="1">
    <location>
        <begin position="34"/>
        <end position="37"/>
    </location>
    <ligand>
        <name>substrate</name>
    </ligand>
</feature>
<feature type="binding site" evidence="1">
    <location>
        <begin position="124"/>
        <end position="130"/>
    </location>
    <ligand>
        <name>ATP</name>
        <dbReference type="ChEBI" id="CHEBI:30616"/>
    </ligand>
</feature>
<feature type="binding site" evidence="1">
    <location>
        <position position="130"/>
    </location>
    <ligand>
        <name>Mg(2+)</name>
        <dbReference type="ChEBI" id="CHEBI:18420"/>
    </ligand>
</feature>
<feature type="binding site" evidence="1">
    <location>
        <position position="162"/>
    </location>
    <ligand>
        <name>Mg(2+)</name>
        <dbReference type="ChEBI" id="CHEBI:18420"/>
    </ligand>
</feature>
<feature type="binding site" evidence="1">
    <location>
        <position position="223"/>
    </location>
    <ligand>
        <name>substrate</name>
    </ligand>
</feature>
<feature type="site" description="Transition state stabilizer" evidence="1">
    <location>
        <position position="28"/>
    </location>
</feature>
<dbReference type="EC" id="2.7.1.6" evidence="1"/>
<dbReference type="EMBL" id="CP000668">
    <property type="protein sequence ID" value="ABP40930.1"/>
    <property type="molecule type" value="Genomic_DNA"/>
</dbReference>
<dbReference type="RefSeq" id="WP_002210748.1">
    <property type="nucleotide sequence ID" value="NZ_CP009715.1"/>
</dbReference>
<dbReference type="SMR" id="A4TNR8"/>
<dbReference type="GeneID" id="57977277"/>
<dbReference type="KEGG" id="ypp:YPDSF_2560"/>
<dbReference type="PATRIC" id="fig|386656.14.peg.4079"/>
<dbReference type="UniPathway" id="UPA00214"/>
<dbReference type="GO" id="GO:0005829">
    <property type="term" value="C:cytosol"/>
    <property type="evidence" value="ECO:0007669"/>
    <property type="project" value="TreeGrafter"/>
</dbReference>
<dbReference type="GO" id="GO:0005524">
    <property type="term" value="F:ATP binding"/>
    <property type="evidence" value="ECO:0007669"/>
    <property type="project" value="UniProtKB-UniRule"/>
</dbReference>
<dbReference type="GO" id="GO:0004335">
    <property type="term" value="F:galactokinase activity"/>
    <property type="evidence" value="ECO:0007669"/>
    <property type="project" value="UniProtKB-UniRule"/>
</dbReference>
<dbReference type="GO" id="GO:0000287">
    <property type="term" value="F:magnesium ion binding"/>
    <property type="evidence" value="ECO:0007669"/>
    <property type="project" value="UniProtKB-UniRule"/>
</dbReference>
<dbReference type="GO" id="GO:0006012">
    <property type="term" value="P:galactose metabolic process"/>
    <property type="evidence" value="ECO:0007669"/>
    <property type="project" value="UniProtKB-UniRule"/>
</dbReference>
<dbReference type="FunFam" id="3.30.230.10:FF:000017">
    <property type="entry name" value="Galactokinase"/>
    <property type="match status" value="1"/>
</dbReference>
<dbReference type="FunFam" id="3.30.70.890:FF:000001">
    <property type="entry name" value="Galactokinase"/>
    <property type="match status" value="1"/>
</dbReference>
<dbReference type="Gene3D" id="3.30.230.10">
    <property type="match status" value="1"/>
</dbReference>
<dbReference type="Gene3D" id="3.30.70.890">
    <property type="entry name" value="GHMP kinase, C-terminal domain"/>
    <property type="match status" value="1"/>
</dbReference>
<dbReference type="HAMAP" id="MF_00246">
    <property type="entry name" value="Galactokinase"/>
    <property type="match status" value="1"/>
</dbReference>
<dbReference type="InterPro" id="IPR000705">
    <property type="entry name" value="Galactokinase"/>
</dbReference>
<dbReference type="InterPro" id="IPR022963">
    <property type="entry name" value="Galactokinase_bac"/>
</dbReference>
<dbReference type="InterPro" id="IPR019741">
    <property type="entry name" value="Galactokinase_CS"/>
</dbReference>
<dbReference type="InterPro" id="IPR019539">
    <property type="entry name" value="GalKase_N"/>
</dbReference>
<dbReference type="InterPro" id="IPR013750">
    <property type="entry name" value="GHMP_kinase_C_dom"/>
</dbReference>
<dbReference type="InterPro" id="IPR036554">
    <property type="entry name" value="GHMP_kinase_C_sf"/>
</dbReference>
<dbReference type="InterPro" id="IPR006204">
    <property type="entry name" value="GHMP_kinase_N_dom"/>
</dbReference>
<dbReference type="InterPro" id="IPR006203">
    <property type="entry name" value="GHMP_knse_ATP-bd_CS"/>
</dbReference>
<dbReference type="InterPro" id="IPR006206">
    <property type="entry name" value="Mevalonate/galactokinase"/>
</dbReference>
<dbReference type="InterPro" id="IPR020568">
    <property type="entry name" value="Ribosomal_Su5_D2-typ_SF"/>
</dbReference>
<dbReference type="InterPro" id="IPR014721">
    <property type="entry name" value="Ribsml_uS5_D2-typ_fold_subgr"/>
</dbReference>
<dbReference type="NCBIfam" id="TIGR00131">
    <property type="entry name" value="gal_kin"/>
    <property type="match status" value="1"/>
</dbReference>
<dbReference type="NCBIfam" id="NF003472">
    <property type="entry name" value="PRK05101.1"/>
    <property type="match status" value="1"/>
</dbReference>
<dbReference type="PANTHER" id="PTHR10457:SF7">
    <property type="entry name" value="GALACTOKINASE-RELATED"/>
    <property type="match status" value="1"/>
</dbReference>
<dbReference type="PANTHER" id="PTHR10457">
    <property type="entry name" value="MEVALONATE KINASE/GALACTOKINASE"/>
    <property type="match status" value="1"/>
</dbReference>
<dbReference type="Pfam" id="PF10509">
    <property type="entry name" value="GalKase_gal_bdg"/>
    <property type="match status" value="1"/>
</dbReference>
<dbReference type="Pfam" id="PF08544">
    <property type="entry name" value="GHMP_kinases_C"/>
    <property type="match status" value="1"/>
</dbReference>
<dbReference type="Pfam" id="PF00288">
    <property type="entry name" value="GHMP_kinases_N"/>
    <property type="match status" value="1"/>
</dbReference>
<dbReference type="PIRSF" id="PIRSF000530">
    <property type="entry name" value="Galactokinase"/>
    <property type="match status" value="1"/>
</dbReference>
<dbReference type="PRINTS" id="PR00473">
    <property type="entry name" value="GALCTOKINASE"/>
</dbReference>
<dbReference type="PRINTS" id="PR00959">
    <property type="entry name" value="MEVGALKINASE"/>
</dbReference>
<dbReference type="SUPFAM" id="SSF55060">
    <property type="entry name" value="GHMP Kinase, C-terminal domain"/>
    <property type="match status" value="1"/>
</dbReference>
<dbReference type="SUPFAM" id="SSF54211">
    <property type="entry name" value="Ribosomal protein S5 domain 2-like"/>
    <property type="match status" value="1"/>
</dbReference>
<dbReference type="PROSITE" id="PS00106">
    <property type="entry name" value="GALACTOKINASE"/>
    <property type="match status" value="1"/>
</dbReference>
<dbReference type="PROSITE" id="PS00627">
    <property type="entry name" value="GHMP_KINASES_ATP"/>
    <property type="match status" value="1"/>
</dbReference>
<proteinExistence type="inferred from homology"/>
<evidence type="ECO:0000255" key="1">
    <source>
        <dbReference type="HAMAP-Rule" id="MF_00246"/>
    </source>
</evidence>